<protein>
    <recommendedName>
        <fullName evidence="1">tRNA N6-adenosine threonylcarbamoyltransferase</fullName>
        <ecNumber evidence="1">2.3.1.234</ecNumber>
    </recommendedName>
    <alternativeName>
        <fullName evidence="1">N6-L-threonylcarbamoyladenine synthase</fullName>
        <shortName evidence="1">t(6)A synthase</shortName>
    </alternativeName>
    <alternativeName>
        <fullName evidence="1">t(6)A37 threonylcarbamoyladenosine biosynthesis protein TsaD</fullName>
    </alternativeName>
    <alternativeName>
        <fullName evidence="1">tRNA threonylcarbamoyladenosine biosynthesis protein TsaD</fullName>
    </alternativeName>
</protein>
<reference key="1">
    <citation type="submission" date="2006-12" db="EMBL/GenBank/DDBJ databases">
        <authorList>
            <person name="Fouts D.E."/>
            <person name="Nelson K.E."/>
            <person name="Sebastian Y."/>
        </authorList>
    </citation>
    <scope>NUCLEOTIDE SEQUENCE [LARGE SCALE GENOMIC DNA]</scope>
    <source>
        <strain>81-176</strain>
    </source>
</reference>
<name>TSAD_CAMJJ</name>
<feature type="chain" id="PRO_0000303312" description="tRNA N6-adenosine threonylcarbamoyltransferase">
    <location>
        <begin position="1"/>
        <end position="335"/>
    </location>
</feature>
<feature type="binding site" evidence="1">
    <location>
        <position position="110"/>
    </location>
    <ligand>
        <name>Fe cation</name>
        <dbReference type="ChEBI" id="CHEBI:24875"/>
    </ligand>
</feature>
<feature type="binding site" evidence="1">
    <location>
        <position position="114"/>
    </location>
    <ligand>
        <name>Fe cation</name>
        <dbReference type="ChEBI" id="CHEBI:24875"/>
    </ligand>
</feature>
<feature type="binding site" evidence="1">
    <location>
        <begin position="132"/>
        <end position="136"/>
    </location>
    <ligand>
        <name>substrate</name>
    </ligand>
</feature>
<feature type="binding site" evidence="1">
    <location>
        <position position="165"/>
    </location>
    <ligand>
        <name>substrate</name>
    </ligand>
</feature>
<feature type="binding site" evidence="1">
    <location>
        <position position="178"/>
    </location>
    <ligand>
        <name>substrate</name>
    </ligand>
</feature>
<feature type="binding site" evidence="1">
    <location>
        <position position="271"/>
    </location>
    <ligand>
        <name>substrate</name>
    </ligand>
</feature>
<feature type="binding site" evidence="1">
    <location>
        <position position="299"/>
    </location>
    <ligand>
        <name>Fe cation</name>
        <dbReference type="ChEBI" id="CHEBI:24875"/>
    </ligand>
</feature>
<comment type="function">
    <text evidence="1">Required for the formation of a threonylcarbamoyl group on adenosine at position 37 (t(6)A37) in tRNAs that read codons beginning with adenine. Is involved in the transfer of the threonylcarbamoyl moiety of threonylcarbamoyl-AMP (TC-AMP) to the N6 group of A37, together with TsaE and TsaB. TsaD likely plays a direct catalytic role in this reaction.</text>
</comment>
<comment type="catalytic activity">
    <reaction evidence="1">
        <text>L-threonylcarbamoyladenylate + adenosine(37) in tRNA = N(6)-L-threonylcarbamoyladenosine(37) in tRNA + AMP + H(+)</text>
        <dbReference type="Rhea" id="RHEA:37059"/>
        <dbReference type="Rhea" id="RHEA-COMP:10162"/>
        <dbReference type="Rhea" id="RHEA-COMP:10163"/>
        <dbReference type="ChEBI" id="CHEBI:15378"/>
        <dbReference type="ChEBI" id="CHEBI:73682"/>
        <dbReference type="ChEBI" id="CHEBI:74411"/>
        <dbReference type="ChEBI" id="CHEBI:74418"/>
        <dbReference type="ChEBI" id="CHEBI:456215"/>
        <dbReference type="EC" id="2.3.1.234"/>
    </reaction>
</comment>
<comment type="cofactor">
    <cofactor evidence="1">
        <name>Fe(2+)</name>
        <dbReference type="ChEBI" id="CHEBI:29033"/>
    </cofactor>
    <text evidence="1">Binds 1 Fe(2+) ion per subunit.</text>
</comment>
<comment type="subcellular location">
    <subcellularLocation>
        <location evidence="1">Cytoplasm</location>
    </subcellularLocation>
</comment>
<comment type="similarity">
    <text evidence="1">Belongs to the KAE1 / TsaD family.</text>
</comment>
<organism>
    <name type="scientific">Campylobacter jejuni subsp. jejuni serotype O:23/36 (strain 81-176)</name>
    <dbReference type="NCBI Taxonomy" id="354242"/>
    <lineage>
        <taxon>Bacteria</taxon>
        <taxon>Pseudomonadati</taxon>
        <taxon>Campylobacterota</taxon>
        <taxon>Epsilonproteobacteria</taxon>
        <taxon>Campylobacterales</taxon>
        <taxon>Campylobacteraceae</taxon>
        <taxon>Campylobacter</taxon>
    </lineage>
</organism>
<keyword id="KW-0012">Acyltransferase</keyword>
<keyword id="KW-0963">Cytoplasm</keyword>
<keyword id="KW-0408">Iron</keyword>
<keyword id="KW-0479">Metal-binding</keyword>
<keyword id="KW-0808">Transferase</keyword>
<keyword id="KW-0819">tRNA processing</keyword>
<gene>
    <name evidence="1" type="primary">tsaD</name>
    <name type="synonym">gcp</name>
    <name type="ordered locus">CJJ81176_1343</name>
</gene>
<proteinExistence type="inferred from homology"/>
<sequence length="335" mass="37056">MKNLILAIESSCDDSSIAIIDKNTLECKFHKKISQELDHSIYGGVVPELAARLHSEALPKILKQCNEHFKNLCAIAVTNEPGLSVSLLSGISMAKTLASALNLPLIPINHLKGHIYSLFLEEKISLDIGILLVSGGHTMVLYLKDDANLELLASTNDDSFGESFDKVAKMMNLGYPGGVIIENLAKNAKLKNISFNIPLKHSKELAYSFSGLKNAVRLEILKHENLSDDIKAEIAYAFENTACDHIMDKLEKIFNLYKFKNFGVVGGASANLNLRSRLQNLCQKYNANLKLAPLKFCSDNALMIARAAVDAYEKKEFVSIEEDILSPKNKNFSRI</sequence>
<accession>A1W0W0</accession>
<dbReference type="EC" id="2.3.1.234" evidence="1"/>
<dbReference type="EMBL" id="CP000538">
    <property type="protein sequence ID" value="EAQ72918.1"/>
    <property type="molecule type" value="Genomic_DNA"/>
</dbReference>
<dbReference type="RefSeq" id="WP_002869327.1">
    <property type="nucleotide sequence ID" value="NC_008787.1"/>
</dbReference>
<dbReference type="SMR" id="A1W0W0"/>
<dbReference type="KEGG" id="cjj:CJJ81176_1343"/>
<dbReference type="eggNOG" id="COG0533">
    <property type="taxonomic scope" value="Bacteria"/>
</dbReference>
<dbReference type="HOGENOM" id="CLU_023208_0_3_7"/>
<dbReference type="Proteomes" id="UP000000646">
    <property type="component" value="Chromosome"/>
</dbReference>
<dbReference type="GO" id="GO:0005737">
    <property type="term" value="C:cytoplasm"/>
    <property type="evidence" value="ECO:0007669"/>
    <property type="project" value="UniProtKB-SubCell"/>
</dbReference>
<dbReference type="GO" id="GO:0005506">
    <property type="term" value="F:iron ion binding"/>
    <property type="evidence" value="ECO:0007669"/>
    <property type="project" value="UniProtKB-UniRule"/>
</dbReference>
<dbReference type="GO" id="GO:0061711">
    <property type="term" value="F:N(6)-L-threonylcarbamoyladenine synthase activity"/>
    <property type="evidence" value="ECO:0007669"/>
    <property type="project" value="UniProtKB-EC"/>
</dbReference>
<dbReference type="GO" id="GO:0002949">
    <property type="term" value="P:tRNA threonylcarbamoyladenosine modification"/>
    <property type="evidence" value="ECO:0007669"/>
    <property type="project" value="UniProtKB-UniRule"/>
</dbReference>
<dbReference type="Gene3D" id="3.30.420.40">
    <property type="match status" value="2"/>
</dbReference>
<dbReference type="HAMAP" id="MF_01445">
    <property type="entry name" value="TsaD"/>
    <property type="match status" value="1"/>
</dbReference>
<dbReference type="InterPro" id="IPR043129">
    <property type="entry name" value="ATPase_NBD"/>
</dbReference>
<dbReference type="InterPro" id="IPR000905">
    <property type="entry name" value="Gcp-like_dom"/>
</dbReference>
<dbReference type="InterPro" id="IPR017861">
    <property type="entry name" value="KAE1/TsaD"/>
</dbReference>
<dbReference type="InterPro" id="IPR017860">
    <property type="entry name" value="Peptidase_M22_CS"/>
</dbReference>
<dbReference type="InterPro" id="IPR022450">
    <property type="entry name" value="TsaD"/>
</dbReference>
<dbReference type="NCBIfam" id="TIGR00329">
    <property type="entry name" value="gcp_kae1"/>
    <property type="match status" value="1"/>
</dbReference>
<dbReference type="NCBIfam" id="TIGR03723">
    <property type="entry name" value="T6A_TsaD_YgjD"/>
    <property type="match status" value="1"/>
</dbReference>
<dbReference type="PANTHER" id="PTHR11735">
    <property type="entry name" value="TRNA N6-ADENOSINE THREONYLCARBAMOYLTRANSFERASE"/>
    <property type="match status" value="1"/>
</dbReference>
<dbReference type="PANTHER" id="PTHR11735:SF6">
    <property type="entry name" value="TRNA N6-ADENOSINE THREONYLCARBAMOYLTRANSFERASE, MITOCHONDRIAL"/>
    <property type="match status" value="1"/>
</dbReference>
<dbReference type="Pfam" id="PF00814">
    <property type="entry name" value="TsaD"/>
    <property type="match status" value="1"/>
</dbReference>
<dbReference type="PRINTS" id="PR00789">
    <property type="entry name" value="OSIALOPTASE"/>
</dbReference>
<dbReference type="SUPFAM" id="SSF53067">
    <property type="entry name" value="Actin-like ATPase domain"/>
    <property type="match status" value="2"/>
</dbReference>
<dbReference type="PROSITE" id="PS01016">
    <property type="entry name" value="GLYCOPROTEASE"/>
    <property type="match status" value="1"/>
</dbReference>
<evidence type="ECO:0000255" key="1">
    <source>
        <dbReference type="HAMAP-Rule" id="MF_01445"/>
    </source>
</evidence>